<dbReference type="EMBL" id="AY572960">
    <property type="protein sequence ID" value="AAS78805.1"/>
    <property type="molecule type" value="mRNA"/>
</dbReference>
<dbReference type="EMBL" id="AC051633">
    <property type="protein sequence ID" value="AAG13588.1"/>
    <property type="molecule type" value="Genomic_DNA"/>
</dbReference>
<dbReference type="EMBL" id="DP000086">
    <property type="protein sequence ID" value="AAP54858.2"/>
    <property type="status" value="ALT_SEQ"/>
    <property type="molecule type" value="Genomic_DNA"/>
</dbReference>
<dbReference type="EMBL" id="DP000086">
    <property type="protein sequence ID" value="ABG66228.1"/>
    <property type="molecule type" value="Genomic_DNA"/>
</dbReference>
<dbReference type="EMBL" id="AP008216">
    <property type="protein sequence ID" value="BAF27106.1"/>
    <property type="molecule type" value="Genomic_DNA"/>
</dbReference>
<dbReference type="EMBL" id="AP014966">
    <property type="protein sequence ID" value="BAT11872.1"/>
    <property type="molecule type" value="Genomic_DNA"/>
</dbReference>
<dbReference type="EMBL" id="CM000147">
    <property type="protein sequence ID" value="EAZ16852.1"/>
    <property type="molecule type" value="Genomic_DNA"/>
</dbReference>
<dbReference type="EMBL" id="AK063504">
    <property type="protein sequence ID" value="BAG88740.1"/>
    <property type="molecule type" value="mRNA"/>
</dbReference>
<dbReference type="EMBL" id="AK102405">
    <property type="protein sequence ID" value="BAG95542.1"/>
    <property type="molecule type" value="mRNA"/>
</dbReference>
<dbReference type="RefSeq" id="XP_015614224.1">
    <property type="nucleotide sequence ID" value="XM_015758738.1"/>
</dbReference>
<dbReference type="SMR" id="Q109B0"/>
<dbReference type="FunCoup" id="Q109B0">
    <property type="interactions" value="111"/>
</dbReference>
<dbReference type="STRING" id="39947.Q109B0"/>
<dbReference type="PaxDb" id="39947-Q109B0"/>
<dbReference type="EnsemblPlants" id="Os10t0542100-01">
    <property type="protein sequence ID" value="Os10t0542100-01"/>
    <property type="gene ID" value="Os10g0542100"/>
</dbReference>
<dbReference type="Gramene" id="Os10t0542100-01">
    <property type="protein sequence ID" value="Os10t0542100-01"/>
    <property type="gene ID" value="Os10g0542100"/>
</dbReference>
<dbReference type="KEGG" id="dosa:Os10g0542100"/>
<dbReference type="eggNOG" id="ENOG502S74E">
    <property type="taxonomic scope" value="Eukaryota"/>
</dbReference>
<dbReference type="HOGENOM" id="CLU_166374_0_0_1"/>
<dbReference type="InParanoid" id="Q109B0"/>
<dbReference type="OMA" id="NCNCASC"/>
<dbReference type="OrthoDB" id="1929463at2759"/>
<dbReference type="Proteomes" id="UP000000763">
    <property type="component" value="Chromosome 10"/>
</dbReference>
<dbReference type="Proteomes" id="UP000007752">
    <property type="component" value="Chromosome 10"/>
</dbReference>
<dbReference type="Proteomes" id="UP000059680">
    <property type="component" value="Chromosome 10"/>
</dbReference>
<dbReference type="GO" id="GO:0008270">
    <property type="term" value="F:zinc ion binding"/>
    <property type="evidence" value="ECO:0007669"/>
    <property type="project" value="InterPro"/>
</dbReference>
<dbReference type="InterPro" id="IPR000316">
    <property type="entry name" value="Metallthion_15"/>
</dbReference>
<dbReference type="PANTHER" id="PTHR48198">
    <property type="entry name" value="EC PROTEIN HOMOLOG"/>
    <property type="match status" value="1"/>
</dbReference>
<dbReference type="PANTHER" id="PTHR48198:SF1">
    <property type="entry name" value="METALLOTHIONEIN-LIKE PROTEIN 4A-RELATED"/>
    <property type="match status" value="1"/>
</dbReference>
<dbReference type="Pfam" id="PF02068">
    <property type="entry name" value="Metallothio_PEC"/>
    <property type="match status" value="1"/>
</dbReference>
<dbReference type="PRINTS" id="PR00877">
    <property type="entry name" value="MTPLANTPEC"/>
</dbReference>
<reference key="1">
    <citation type="journal article" date="2005" name="J. Plant Physiol.">
        <title>Characterization of a rice class II metallothionein gene: tissue expression patterns and induction in response to abiotic factors.</title>
        <authorList>
            <person name="Zhou G."/>
            <person name="Xu Y."/>
            <person name="Liu J.-Y."/>
        </authorList>
    </citation>
    <scope>NUCLEOTIDE SEQUENCE [MRNA]</scope>
    <scope>TISSUE SPECIFICITY</scope>
    <scope>INDUCTION</scope>
</reference>
<reference key="2">
    <citation type="journal article" date="2003" name="Science">
        <title>In-depth view of structure, activity, and evolution of rice chromosome 10.</title>
        <authorList>
            <person name="Yu Y."/>
            <person name="Rambo T."/>
            <person name="Currie J."/>
            <person name="Saski C."/>
            <person name="Kim H.-R."/>
            <person name="Collura K."/>
            <person name="Thompson S."/>
            <person name="Simmons J."/>
            <person name="Yang T.-J."/>
            <person name="Nah G."/>
            <person name="Patel A.J."/>
            <person name="Thurmond S."/>
            <person name="Henry D."/>
            <person name="Oates R."/>
            <person name="Palmer M."/>
            <person name="Pries G."/>
            <person name="Gibson J."/>
            <person name="Anderson H."/>
            <person name="Paradkar M."/>
            <person name="Crane L."/>
            <person name="Dale J."/>
            <person name="Carver M.B."/>
            <person name="Wood T."/>
            <person name="Frisch D."/>
            <person name="Engler F."/>
            <person name="Soderlund C."/>
            <person name="Palmer L.E."/>
            <person name="Teytelman L."/>
            <person name="Nascimento L."/>
            <person name="De la Bastide M."/>
            <person name="Spiegel L."/>
            <person name="Ware D."/>
            <person name="O'Shaughnessy A."/>
            <person name="Dike S."/>
            <person name="Dedhia N."/>
            <person name="Preston R."/>
            <person name="Huang E."/>
            <person name="Ferraro K."/>
            <person name="Kuit K."/>
            <person name="Miller B."/>
            <person name="Zutavern T."/>
            <person name="Katzenberger F."/>
            <person name="Muller S."/>
            <person name="Balija V."/>
            <person name="Martienssen R.A."/>
            <person name="Stein L."/>
            <person name="Minx P."/>
            <person name="Johnson D."/>
            <person name="Cordum H."/>
            <person name="Mardis E."/>
            <person name="Cheng Z."/>
            <person name="Jiang J."/>
            <person name="Wilson R."/>
            <person name="McCombie W.R."/>
            <person name="Wing R.A."/>
            <person name="Yuan Q."/>
            <person name="Ouyang S."/>
            <person name="Liu J."/>
            <person name="Jones K.M."/>
            <person name="Gansberger K."/>
            <person name="Moffat K."/>
            <person name="Hill J."/>
            <person name="Tsitrin T."/>
            <person name="Overton L."/>
            <person name="Bera J."/>
            <person name="Kim M."/>
            <person name="Jin S."/>
            <person name="Tallon L."/>
            <person name="Ciecko A."/>
            <person name="Pai G."/>
            <person name="Van Aken S."/>
            <person name="Utterback T."/>
            <person name="Reidmuller S."/>
            <person name="Bormann J."/>
            <person name="Feldblyum T."/>
            <person name="Hsiao J."/>
            <person name="Zismann V."/>
            <person name="Blunt S."/>
            <person name="de Vazeille A.R."/>
            <person name="Shaffer T."/>
            <person name="Koo H."/>
            <person name="Suh B."/>
            <person name="Yang Q."/>
            <person name="Haas B."/>
            <person name="Peterson J."/>
            <person name="Pertea M."/>
            <person name="Volfovsky N."/>
            <person name="Wortman J."/>
            <person name="White O."/>
            <person name="Salzberg S.L."/>
            <person name="Fraser C.M."/>
            <person name="Buell C.R."/>
            <person name="Messing J."/>
            <person name="Song R."/>
            <person name="Fuks G."/>
            <person name="Llaca V."/>
            <person name="Kovchak S."/>
            <person name="Young S."/>
            <person name="Bowers J.E."/>
            <person name="Paterson A.H."/>
            <person name="Johns M.A."/>
            <person name="Mao L."/>
            <person name="Pan H."/>
            <person name="Dean R.A."/>
        </authorList>
    </citation>
    <scope>NUCLEOTIDE SEQUENCE [LARGE SCALE GENOMIC DNA]</scope>
    <source>
        <strain>cv. Nipponbare</strain>
    </source>
</reference>
<reference key="3">
    <citation type="journal article" date="2005" name="Nature">
        <title>The map-based sequence of the rice genome.</title>
        <authorList>
            <consortium name="International rice genome sequencing project (IRGSP)"/>
        </authorList>
    </citation>
    <scope>NUCLEOTIDE SEQUENCE [LARGE SCALE GENOMIC DNA]</scope>
    <source>
        <strain>cv. Nipponbare</strain>
    </source>
</reference>
<reference key="4">
    <citation type="journal article" date="2008" name="Nucleic Acids Res.">
        <title>The rice annotation project database (RAP-DB): 2008 update.</title>
        <authorList>
            <consortium name="The rice annotation project (RAP)"/>
        </authorList>
    </citation>
    <scope>GENOME REANNOTATION</scope>
    <source>
        <strain>cv. Nipponbare</strain>
    </source>
</reference>
<reference key="5">
    <citation type="journal article" date="2013" name="Rice">
        <title>Improvement of the Oryza sativa Nipponbare reference genome using next generation sequence and optical map data.</title>
        <authorList>
            <person name="Kawahara Y."/>
            <person name="de la Bastide M."/>
            <person name="Hamilton J.P."/>
            <person name="Kanamori H."/>
            <person name="McCombie W.R."/>
            <person name="Ouyang S."/>
            <person name="Schwartz D.C."/>
            <person name="Tanaka T."/>
            <person name="Wu J."/>
            <person name="Zhou S."/>
            <person name="Childs K.L."/>
            <person name="Davidson R.M."/>
            <person name="Lin H."/>
            <person name="Quesada-Ocampo L."/>
            <person name="Vaillancourt B."/>
            <person name="Sakai H."/>
            <person name="Lee S.S."/>
            <person name="Kim J."/>
            <person name="Numa H."/>
            <person name="Itoh T."/>
            <person name="Buell C.R."/>
            <person name="Matsumoto T."/>
        </authorList>
    </citation>
    <scope>GENOME REANNOTATION</scope>
    <source>
        <strain>cv. Nipponbare</strain>
    </source>
</reference>
<reference key="6">
    <citation type="journal article" date="2005" name="PLoS Biol.">
        <title>The genomes of Oryza sativa: a history of duplications.</title>
        <authorList>
            <person name="Yu J."/>
            <person name="Wang J."/>
            <person name="Lin W."/>
            <person name="Li S."/>
            <person name="Li H."/>
            <person name="Zhou J."/>
            <person name="Ni P."/>
            <person name="Dong W."/>
            <person name="Hu S."/>
            <person name="Zeng C."/>
            <person name="Zhang J."/>
            <person name="Zhang Y."/>
            <person name="Li R."/>
            <person name="Xu Z."/>
            <person name="Li S."/>
            <person name="Li X."/>
            <person name="Zheng H."/>
            <person name="Cong L."/>
            <person name="Lin L."/>
            <person name="Yin J."/>
            <person name="Geng J."/>
            <person name="Li G."/>
            <person name="Shi J."/>
            <person name="Liu J."/>
            <person name="Lv H."/>
            <person name="Li J."/>
            <person name="Wang J."/>
            <person name="Deng Y."/>
            <person name="Ran L."/>
            <person name="Shi X."/>
            <person name="Wang X."/>
            <person name="Wu Q."/>
            <person name="Li C."/>
            <person name="Ren X."/>
            <person name="Wang J."/>
            <person name="Wang X."/>
            <person name="Li D."/>
            <person name="Liu D."/>
            <person name="Zhang X."/>
            <person name="Ji Z."/>
            <person name="Zhao W."/>
            <person name="Sun Y."/>
            <person name="Zhang Z."/>
            <person name="Bao J."/>
            <person name="Han Y."/>
            <person name="Dong L."/>
            <person name="Ji J."/>
            <person name="Chen P."/>
            <person name="Wu S."/>
            <person name="Liu J."/>
            <person name="Xiao Y."/>
            <person name="Bu D."/>
            <person name="Tan J."/>
            <person name="Yang L."/>
            <person name="Ye C."/>
            <person name="Zhang J."/>
            <person name="Xu J."/>
            <person name="Zhou Y."/>
            <person name="Yu Y."/>
            <person name="Zhang B."/>
            <person name="Zhuang S."/>
            <person name="Wei H."/>
            <person name="Liu B."/>
            <person name="Lei M."/>
            <person name="Yu H."/>
            <person name="Li Y."/>
            <person name="Xu H."/>
            <person name="Wei S."/>
            <person name="He X."/>
            <person name="Fang L."/>
            <person name="Zhang Z."/>
            <person name="Zhang Y."/>
            <person name="Huang X."/>
            <person name="Su Z."/>
            <person name="Tong W."/>
            <person name="Li J."/>
            <person name="Tong Z."/>
            <person name="Li S."/>
            <person name="Ye J."/>
            <person name="Wang L."/>
            <person name="Fang L."/>
            <person name="Lei T."/>
            <person name="Chen C.-S."/>
            <person name="Chen H.-C."/>
            <person name="Xu Z."/>
            <person name="Li H."/>
            <person name="Huang H."/>
            <person name="Zhang F."/>
            <person name="Xu H."/>
            <person name="Li N."/>
            <person name="Zhao C."/>
            <person name="Li S."/>
            <person name="Dong L."/>
            <person name="Huang Y."/>
            <person name="Li L."/>
            <person name="Xi Y."/>
            <person name="Qi Q."/>
            <person name="Li W."/>
            <person name="Zhang B."/>
            <person name="Hu W."/>
            <person name="Zhang Y."/>
            <person name="Tian X."/>
            <person name="Jiao Y."/>
            <person name="Liang X."/>
            <person name="Jin J."/>
            <person name="Gao L."/>
            <person name="Zheng W."/>
            <person name="Hao B."/>
            <person name="Liu S.-M."/>
            <person name="Wang W."/>
            <person name="Yuan L."/>
            <person name="Cao M."/>
            <person name="McDermott J."/>
            <person name="Samudrala R."/>
            <person name="Wang J."/>
            <person name="Wong G.K.-S."/>
            <person name="Yang H."/>
        </authorList>
    </citation>
    <scope>NUCLEOTIDE SEQUENCE [LARGE SCALE GENOMIC DNA]</scope>
    <source>
        <strain>cv. Nipponbare</strain>
    </source>
</reference>
<reference key="7">
    <citation type="journal article" date="2003" name="Science">
        <title>Collection, mapping, and annotation of over 28,000 cDNA clones from japonica rice.</title>
        <authorList>
            <consortium name="The rice full-length cDNA consortium"/>
        </authorList>
    </citation>
    <scope>NUCLEOTIDE SEQUENCE [LARGE SCALE MRNA]</scope>
    <source>
        <strain>cv. Nipponbare</strain>
    </source>
</reference>
<reference key="8">
    <citation type="journal article" date="2006" name="J. Biochem. Mol. Biol.">
        <title>Molecular analyses of the metallothionein gene family in rice (Oryza sativa L.).</title>
        <authorList>
            <person name="Zhou G."/>
            <person name="Xu Y."/>
            <person name="Li J."/>
            <person name="Yang L."/>
            <person name="Liu J.-Y."/>
        </authorList>
    </citation>
    <scope>GENE FAMILY</scope>
    <scope>TISSUE SPECIFICITY</scope>
</reference>
<sequence>MGCDDKCGCAVPCPGGTGCRCASSARSGGGDHTTCSCGDHCGCNPCRCGRESQPTGRENRRAGCSCGDSCTCASCGSTTTTAPAATT</sequence>
<keyword id="KW-0479">Metal-binding</keyword>
<keyword id="KW-0480">Metal-thiolate cluster</keyword>
<keyword id="KW-1185">Reference proteome</keyword>
<name>MT21A_ORYSJ</name>
<comment type="function">
    <text evidence="3">Metallothioneins have a high content of cysteine residues that bind various heavy metals.</text>
</comment>
<comment type="tissue specificity">
    <text evidence="1 2">Expressed in developing seeds.</text>
</comment>
<comment type="induction">
    <text evidence="1">By hydrogen peroxide, ethephon, abscicic acid (ABA) and salicylic acid (SA). Barely induced by heavy metals.</text>
</comment>
<comment type="similarity">
    <text evidence="3">Belongs to the metallothionein superfamily. Type 15 family.</text>
</comment>
<comment type="sequence caution" evidence="3">
    <conflict type="erroneous gene model prediction">
        <sequence resource="EMBL-CDS" id="AAP54858"/>
    </conflict>
</comment>
<evidence type="ECO:0000269" key="1">
    <source>
    </source>
</evidence>
<evidence type="ECO:0000269" key="2">
    <source>
    </source>
</evidence>
<evidence type="ECO:0000305" key="3"/>
<gene>
    <name type="primary">MT21A</name>
    <name type="ordered locus">Os10g0542100</name>
    <name type="ordered locus">LOC_Os10g39610</name>
    <name type="ORF">OSJNBb0015I11.8</name>
</gene>
<proteinExistence type="evidence at transcript level"/>
<accession>Q109B0</accession>
<accession>A0A0P0XXP8</accession>
<accession>A3C6Y9</accession>
<accession>Q6PWU6</accession>
<accession>Q7XCL3</accession>
<accession>Q9FWF6</accession>
<organism>
    <name type="scientific">Oryza sativa subsp. japonica</name>
    <name type="common">Rice</name>
    <dbReference type="NCBI Taxonomy" id="39947"/>
    <lineage>
        <taxon>Eukaryota</taxon>
        <taxon>Viridiplantae</taxon>
        <taxon>Streptophyta</taxon>
        <taxon>Embryophyta</taxon>
        <taxon>Tracheophyta</taxon>
        <taxon>Spermatophyta</taxon>
        <taxon>Magnoliopsida</taxon>
        <taxon>Liliopsida</taxon>
        <taxon>Poales</taxon>
        <taxon>Poaceae</taxon>
        <taxon>BOP clade</taxon>
        <taxon>Oryzoideae</taxon>
        <taxon>Oryzeae</taxon>
        <taxon>Oryzinae</taxon>
        <taxon>Oryza</taxon>
        <taxon>Oryza sativa</taxon>
    </lineage>
</organism>
<feature type="chain" id="PRO_0000263062" description="Class II metallothionein-like protein 1A">
    <location>
        <begin position="1"/>
        <end position="87"/>
    </location>
</feature>
<feature type="sequence conflict" description="In Ref. 1; AAS78805." evidence="3" ref="1">
    <original>G</original>
    <variation>S</variation>
    <location>
        <position position="28"/>
    </location>
</feature>
<protein>
    <recommendedName>
        <fullName>Class II metallothionein-like protein 1A</fullName>
    </recommendedName>
    <alternativeName>
        <fullName>OsMT-II-1a</fullName>
    </alternativeName>
    <alternativeName>
        <fullName>OsMT4</fullName>
    </alternativeName>
</protein>